<gene>
    <name type="primary">exbD</name>
    <name type="ordered locus">aq_1839</name>
</gene>
<organism>
    <name type="scientific">Aquifex aeolicus (strain VF5)</name>
    <dbReference type="NCBI Taxonomy" id="224324"/>
    <lineage>
        <taxon>Bacteria</taxon>
        <taxon>Pseudomonadati</taxon>
        <taxon>Aquificota</taxon>
        <taxon>Aquificia</taxon>
        <taxon>Aquificales</taxon>
        <taxon>Aquificaceae</taxon>
        <taxon>Aquifex</taxon>
    </lineage>
</organism>
<keyword id="KW-1003">Cell membrane</keyword>
<keyword id="KW-0472">Membrane</keyword>
<keyword id="KW-0653">Protein transport</keyword>
<keyword id="KW-1185">Reference proteome</keyword>
<keyword id="KW-0812">Transmembrane</keyword>
<keyword id="KW-1133">Transmembrane helix</keyword>
<keyword id="KW-0813">Transport</keyword>
<reference key="1">
    <citation type="journal article" date="1998" name="Nature">
        <title>The complete genome of the hyperthermophilic bacterium Aquifex aeolicus.</title>
        <authorList>
            <person name="Deckert G."/>
            <person name="Warren P.V."/>
            <person name="Gaasterland T."/>
            <person name="Young W.G."/>
            <person name="Lenox A.L."/>
            <person name="Graham D.E."/>
            <person name="Overbeek R."/>
            <person name="Snead M.A."/>
            <person name="Keller M."/>
            <person name="Aujay M."/>
            <person name="Huber R."/>
            <person name="Feldman R.A."/>
            <person name="Short J.M."/>
            <person name="Olsen G.J."/>
            <person name="Swanson R.V."/>
        </authorList>
    </citation>
    <scope>NUCLEOTIDE SEQUENCE [LARGE SCALE GENOMIC DNA]</scope>
    <source>
        <strain>VF5</strain>
    </source>
</reference>
<protein>
    <recommendedName>
        <fullName>Biopolymer transport protein ExbD</fullName>
    </recommendedName>
</protein>
<name>EXBD_AQUAE</name>
<feature type="chain" id="PRO_0000129116" description="Biopolymer transport protein ExbD">
    <location>
        <begin position="1"/>
        <end position="132"/>
    </location>
</feature>
<feature type="topological domain" description="Cytoplasmic" evidence="2">
    <location>
        <begin position="1"/>
        <end position="17"/>
    </location>
</feature>
<feature type="transmembrane region" description="Helical" evidence="2">
    <location>
        <begin position="18"/>
        <end position="38"/>
    </location>
</feature>
<feature type="topological domain" description="Periplasmic" evidence="2">
    <location>
        <begin position="39"/>
        <end position="132"/>
    </location>
</feature>
<sequence>MIIVRSMEEKEISSMNVIPLVDIMLVLLTIVLTTATFIAKGEIPVELPEAKSGKAVQPQESVVITITKEGKIYLKSREVSYEELKEFLKTLNRQTPVEINADKNAKLENFVKVFDLLNQYGFKNVNLLVKKE</sequence>
<accession>O67694</accession>
<proteinExistence type="inferred from homology"/>
<comment type="function">
    <text evidence="1">Involved in the TonB-dependent energy-dependent transport of various receptor-bound substrates.</text>
</comment>
<comment type="subunit">
    <text evidence="1">The accessory proteins ExbB and ExbD seem to form a complex with TonB.</text>
</comment>
<comment type="subcellular location">
    <subcellularLocation>
        <location evidence="3">Cell membrane</location>
        <topology evidence="3">Single-pass type II membrane protein</topology>
    </subcellularLocation>
</comment>
<comment type="similarity">
    <text evidence="3">Belongs to the ExbD/TolR family.</text>
</comment>
<dbReference type="EMBL" id="AE000657">
    <property type="protein sequence ID" value="AAC07651.1"/>
    <property type="molecule type" value="Genomic_DNA"/>
</dbReference>
<dbReference type="PIR" id="D70458">
    <property type="entry name" value="D70458"/>
</dbReference>
<dbReference type="RefSeq" id="NP_214261.1">
    <property type="nucleotide sequence ID" value="NC_000918.1"/>
</dbReference>
<dbReference type="RefSeq" id="WP_010881197.1">
    <property type="nucleotide sequence ID" value="NC_000918.1"/>
</dbReference>
<dbReference type="SMR" id="O67694"/>
<dbReference type="FunCoup" id="O67694">
    <property type="interactions" value="131"/>
</dbReference>
<dbReference type="STRING" id="224324.aq_1839"/>
<dbReference type="EnsemblBacteria" id="AAC07651">
    <property type="protein sequence ID" value="AAC07651"/>
    <property type="gene ID" value="aq_1839"/>
</dbReference>
<dbReference type="KEGG" id="aae:aq_1839"/>
<dbReference type="PATRIC" id="fig|224324.8.peg.1418"/>
<dbReference type="eggNOG" id="COG0848">
    <property type="taxonomic scope" value="Bacteria"/>
</dbReference>
<dbReference type="HOGENOM" id="CLU_085305_2_0_0"/>
<dbReference type="InParanoid" id="O67694"/>
<dbReference type="OrthoDB" id="14324at2"/>
<dbReference type="Proteomes" id="UP000000798">
    <property type="component" value="Chromosome"/>
</dbReference>
<dbReference type="GO" id="GO:0005886">
    <property type="term" value="C:plasma membrane"/>
    <property type="evidence" value="ECO:0000318"/>
    <property type="project" value="GO_Central"/>
</dbReference>
<dbReference type="GO" id="GO:0022857">
    <property type="term" value="F:transmembrane transporter activity"/>
    <property type="evidence" value="ECO:0007669"/>
    <property type="project" value="InterPro"/>
</dbReference>
<dbReference type="GO" id="GO:0015031">
    <property type="term" value="P:protein transport"/>
    <property type="evidence" value="ECO:0007669"/>
    <property type="project" value="UniProtKB-KW"/>
</dbReference>
<dbReference type="Gene3D" id="3.30.420.270">
    <property type="match status" value="1"/>
</dbReference>
<dbReference type="InterPro" id="IPR003400">
    <property type="entry name" value="ExbD"/>
</dbReference>
<dbReference type="PANTHER" id="PTHR30558">
    <property type="entry name" value="EXBD MEMBRANE COMPONENT OF PMF-DRIVEN MACROMOLECULE IMPORT SYSTEM"/>
    <property type="match status" value="1"/>
</dbReference>
<dbReference type="PANTHER" id="PTHR30558:SF7">
    <property type="entry name" value="TOL-PAL SYSTEM PROTEIN TOLR"/>
    <property type="match status" value="1"/>
</dbReference>
<dbReference type="Pfam" id="PF02472">
    <property type="entry name" value="ExbD"/>
    <property type="match status" value="1"/>
</dbReference>
<evidence type="ECO:0000250" key="1"/>
<evidence type="ECO:0000255" key="2"/>
<evidence type="ECO:0000305" key="3"/>